<sequence length="143" mass="16113">MNKTITPSLETIERNWFLVDAKDKTLGRLATEIATVLRGKNKPTFTPHLDTGDFVIVVNAEKIEVSGKKASQKLYRRHSGRPGGMKTEKFESLQERIPERIIEQAVKGMLPHNSLGRQQFKKLKVYKGADHPHAAQNPVLLNS</sequence>
<reference key="1">
    <citation type="journal article" date="2006" name="Science">
        <title>Genomic islands and the ecology and evolution of Prochlorococcus.</title>
        <authorList>
            <person name="Coleman M.L."/>
            <person name="Sullivan M.B."/>
            <person name="Martiny A.C."/>
            <person name="Steglich C."/>
            <person name="Barry K."/>
            <person name="Delong E.F."/>
            <person name="Chisholm S.W."/>
        </authorList>
    </citation>
    <scope>NUCLEOTIDE SEQUENCE [LARGE SCALE GENOMIC DNA]</scope>
    <source>
        <strain>MIT 9312</strain>
    </source>
</reference>
<proteinExistence type="inferred from homology"/>
<comment type="function">
    <text evidence="1">This protein is one of the early assembly proteins of the 50S ribosomal subunit, although it is not seen to bind rRNA by itself. It is important during the early stages of 50S assembly.</text>
</comment>
<comment type="subunit">
    <text evidence="1">Part of the 50S ribosomal subunit.</text>
</comment>
<comment type="similarity">
    <text evidence="1">Belongs to the universal ribosomal protein uL13 family.</text>
</comment>
<keyword id="KW-0687">Ribonucleoprotein</keyword>
<keyword id="KW-0689">Ribosomal protein</keyword>
<dbReference type="EMBL" id="CP000111">
    <property type="protein sequence ID" value="ABB50685.1"/>
    <property type="molecule type" value="Genomic_DNA"/>
</dbReference>
<dbReference type="RefSeq" id="WP_011377167.1">
    <property type="nucleotide sequence ID" value="NC_007577.1"/>
</dbReference>
<dbReference type="SMR" id="Q318L0"/>
<dbReference type="STRING" id="74546.PMT9312_1625"/>
<dbReference type="KEGG" id="pmi:PMT9312_1625"/>
<dbReference type="eggNOG" id="COG0102">
    <property type="taxonomic scope" value="Bacteria"/>
</dbReference>
<dbReference type="HOGENOM" id="CLU_082184_2_2_3"/>
<dbReference type="OrthoDB" id="9801330at2"/>
<dbReference type="Proteomes" id="UP000002715">
    <property type="component" value="Chromosome"/>
</dbReference>
<dbReference type="GO" id="GO:0022625">
    <property type="term" value="C:cytosolic large ribosomal subunit"/>
    <property type="evidence" value="ECO:0007669"/>
    <property type="project" value="TreeGrafter"/>
</dbReference>
<dbReference type="GO" id="GO:0003729">
    <property type="term" value="F:mRNA binding"/>
    <property type="evidence" value="ECO:0007669"/>
    <property type="project" value="TreeGrafter"/>
</dbReference>
<dbReference type="GO" id="GO:0003735">
    <property type="term" value="F:structural constituent of ribosome"/>
    <property type="evidence" value="ECO:0007669"/>
    <property type="project" value="InterPro"/>
</dbReference>
<dbReference type="GO" id="GO:0017148">
    <property type="term" value="P:negative regulation of translation"/>
    <property type="evidence" value="ECO:0007669"/>
    <property type="project" value="TreeGrafter"/>
</dbReference>
<dbReference type="GO" id="GO:0006412">
    <property type="term" value="P:translation"/>
    <property type="evidence" value="ECO:0007669"/>
    <property type="project" value="UniProtKB-UniRule"/>
</dbReference>
<dbReference type="CDD" id="cd00392">
    <property type="entry name" value="Ribosomal_L13"/>
    <property type="match status" value="1"/>
</dbReference>
<dbReference type="FunFam" id="3.90.1180.10:FF:000001">
    <property type="entry name" value="50S ribosomal protein L13"/>
    <property type="match status" value="1"/>
</dbReference>
<dbReference type="Gene3D" id="3.90.1180.10">
    <property type="entry name" value="Ribosomal protein L13"/>
    <property type="match status" value="1"/>
</dbReference>
<dbReference type="HAMAP" id="MF_01366">
    <property type="entry name" value="Ribosomal_uL13"/>
    <property type="match status" value="1"/>
</dbReference>
<dbReference type="InterPro" id="IPR005822">
    <property type="entry name" value="Ribosomal_uL13"/>
</dbReference>
<dbReference type="InterPro" id="IPR005823">
    <property type="entry name" value="Ribosomal_uL13_bac-type"/>
</dbReference>
<dbReference type="InterPro" id="IPR023563">
    <property type="entry name" value="Ribosomal_uL13_CS"/>
</dbReference>
<dbReference type="InterPro" id="IPR036899">
    <property type="entry name" value="Ribosomal_uL13_sf"/>
</dbReference>
<dbReference type="NCBIfam" id="TIGR01066">
    <property type="entry name" value="rplM_bact"/>
    <property type="match status" value="1"/>
</dbReference>
<dbReference type="PANTHER" id="PTHR11545:SF2">
    <property type="entry name" value="LARGE RIBOSOMAL SUBUNIT PROTEIN UL13M"/>
    <property type="match status" value="1"/>
</dbReference>
<dbReference type="PANTHER" id="PTHR11545">
    <property type="entry name" value="RIBOSOMAL PROTEIN L13"/>
    <property type="match status" value="1"/>
</dbReference>
<dbReference type="Pfam" id="PF00572">
    <property type="entry name" value="Ribosomal_L13"/>
    <property type="match status" value="1"/>
</dbReference>
<dbReference type="PIRSF" id="PIRSF002181">
    <property type="entry name" value="Ribosomal_L13"/>
    <property type="match status" value="1"/>
</dbReference>
<dbReference type="SUPFAM" id="SSF52161">
    <property type="entry name" value="Ribosomal protein L13"/>
    <property type="match status" value="1"/>
</dbReference>
<dbReference type="PROSITE" id="PS00783">
    <property type="entry name" value="RIBOSOMAL_L13"/>
    <property type="match status" value="1"/>
</dbReference>
<gene>
    <name evidence="1" type="primary">rplM</name>
    <name evidence="1" type="synonym">rpl13</name>
    <name type="ordered locus">PMT9312_1625</name>
</gene>
<evidence type="ECO:0000255" key="1">
    <source>
        <dbReference type="HAMAP-Rule" id="MF_01366"/>
    </source>
</evidence>
<evidence type="ECO:0000305" key="2"/>
<accession>Q318L0</accession>
<feature type="chain" id="PRO_1000055438" description="Large ribosomal subunit protein uL13">
    <location>
        <begin position="1"/>
        <end position="143"/>
    </location>
</feature>
<name>RL13_PROM9</name>
<organism>
    <name type="scientific">Prochlorococcus marinus (strain MIT 9312)</name>
    <dbReference type="NCBI Taxonomy" id="74546"/>
    <lineage>
        <taxon>Bacteria</taxon>
        <taxon>Bacillati</taxon>
        <taxon>Cyanobacteriota</taxon>
        <taxon>Cyanophyceae</taxon>
        <taxon>Synechococcales</taxon>
        <taxon>Prochlorococcaceae</taxon>
        <taxon>Prochlorococcus</taxon>
    </lineage>
</organism>
<protein>
    <recommendedName>
        <fullName evidence="1">Large ribosomal subunit protein uL13</fullName>
    </recommendedName>
    <alternativeName>
        <fullName evidence="2">50S ribosomal protein L13</fullName>
    </alternativeName>
</protein>